<proteinExistence type="evidence at transcript level"/>
<organism>
    <name type="scientific">Sus scrofa</name>
    <name type="common">Pig</name>
    <dbReference type="NCBI Taxonomy" id="9823"/>
    <lineage>
        <taxon>Eukaryota</taxon>
        <taxon>Metazoa</taxon>
        <taxon>Chordata</taxon>
        <taxon>Craniata</taxon>
        <taxon>Vertebrata</taxon>
        <taxon>Euteleostomi</taxon>
        <taxon>Mammalia</taxon>
        <taxon>Eutheria</taxon>
        <taxon>Laurasiatheria</taxon>
        <taxon>Artiodactyla</taxon>
        <taxon>Suina</taxon>
        <taxon>Suidae</taxon>
        <taxon>Sus</taxon>
    </lineage>
</organism>
<keyword id="KW-1003">Cell membrane</keyword>
<keyword id="KW-0967">Endosome</keyword>
<keyword id="KW-0297">G-protein coupled receptor</keyword>
<keyword id="KW-0325">Glycoprotein</keyword>
<keyword id="KW-0472">Membrane</keyword>
<keyword id="KW-0675">Receptor</keyword>
<keyword id="KW-1185">Reference proteome</keyword>
<keyword id="KW-0807">Transducer</keyword>
<keyword id="KW-0812">Transmembrane</keyword>
<keyword id="KW-1133">Transmembrane helix</keyword>
<name>5HT4R_PIG</name>
<reference key="1">
    <citation type="journal article" date="1995" name="FEBS Lett.">
        <title>Expression of serotonin receptor mRNAs in blood vessels.</title>
        <authorList>
            <person name="Ullmer C."/>
            <person name="Schmuck K."/>
            <person name="Kalkman H.O."/>
            <person name="Luebbert H."/>
        </authorList>
    </citation>
    <scope>NUCLEOTIDE SEQUENCE [MRNA]</scope>
    <source>
        <tissue>Brain</tissue>
    </source>
</reference>
<dbReference type="EMBL" id="Z48175">
    <property type="protein sequence ID" value="CAA88198.1"/>
    <property type="molecule type" value="mRNA"/>
</dbReference>
<dbReference type="PIR" id="S66487">
    <property type="entry name" value="S66487"/>
</dbReference>
<dbReference type="SMR" id="Q29006"/>
<dbReference type="STRING" id="9823.ENSSSCP00000066489"/>
<dbReference type="BindingDB" id="Q29006"/>
<dbReference type="GlyCosmos" id="Q29006">
    <property type="glycosylation" value="1 site, No reported glycans"/>
</dbReference>
<dbReference type="GlyGen" id="Q29006">
    <property type="glycosylation" value="1 site"/>
</dbReference>
<dbReference type="PaxDb" id="9823-ENSSSCP00000015354"/>
<dbReference type="eggNOG" id="KOG3656">
    <property type="taxonomic scope" value="Eukaryota"/>
</dbReference>
<dbReference type="HOGENOM" id="CLU_009579_11_0_1"/>
<dbReference type="InParanoid" id="Q29006"/>
<dbReference type="Proteomes" id="UP000008227">
    <property type="component" value="Unplaced"/>
</dbReference>
<dbReference type="Proteomes" id="UP000314985">
    <property type="component" value="Unplaced"/>
</dbReference>
<dbReference type="Proteomes" id="UP000694570">
    <property type="component" value="Unplaced"/>
</dbReference>
<dbReference type="Proteomes" id="UP000694571">
    <property type="component" value="Unplaced"/>
</dbReference>
<dbReference type="Proteomes" id="UP000694720">
    <property type="component" value="Unplaced"/>
</dbReference>
<dbReference type="Proteomes" id="UP000694722">
    <property type="component" value="Unplaced"/>
</dbReference>
<dbReference type="Proteomes" id="UP000694723">
    <property type="component" value="Unplaced"/>
</dbReference>
<dbReference type="Proteomes" id="UP000694724">
    <property type="component" value="Unplaced"/>
</dbReference>
<dbReference type="Proteomes" id="UP000694725">
    <property type="component" value="Unplaced"/>
</dbReference>
<dbReference type="Proteomes" id="UP000694726">
    <property type="component" value="Unplaced"/>
</dbReference>
<dbReference type="Proteomes" id="UP000694727">
    <property type="component" value="Unplaced"/>
</dbReference>
<dbReference type="Proteomes" id="UP000694728">
    <property type="component" value="Unplaced"/>
</dbReference>
<dbReference type="GO" id="GO:0010008">
    <property type="term" value="C:endosome membrane"/>
    <property type="evidence" value="ECO:0007669"/>
    <property type="project" value="UniProtKB-SubCell"/>
</dbReference>
<dbReference type="GO" id="GO:0005886">
    <property type="term" value="C:plasma membrane"/>
    <property type="evidence" value="ECO:0000250"/>
    <property type="project" value="UniProtKB"/>
</dbReference>
<dbReference type="GO" id="GO:0045202">
    <property type="term" value="C:synapse"/>
    <property type="evidence" value="ECO:0007669"/>
    <property type="project" value="GOC"/>
</dbReference>
<dbReference type="GO" id="GO:0004993">
    <property type="term" value="F:G protein-coupled serotonin receptor activity"/>
    <property type="evidence" value="ECO:0000250"/>
    <property type="project" value="UniProtKB"/>
</dbReference>
<dbReference type="GO" id="GO:0007192">
    <property type="term" value="P:adenylate cyclase-activating serotonin receptor signaling pathway"/>
    <property type="evidence" value="ECO:0000250"/>
    <property type="project" value="UniProtKB"/>
</dbReference>
<dbReference type="GO" id="GO:0007268">
    <property type="term" value="P:chemical synaptic transmission"/>
    <property type="evidence" value="ECO:0007669"/>
    <property type="project" value="InterPro"/>
</dbReference>
<dbReference type="GO" id="GO:0032098">
    <property type="term" value="P:regulation of appetite"/>
    <property type="evidence" value="ECO:0007669"/>
    <property type="project" value="InterPro"/>
</dbReference>
<dbReference type="Gene3D" id="1.20.1070.10">
    <property type="entry name" value="Rhodopsin 7-helix transmembrane proteins"/>
    <property type="match status" value="1"/>
</dbReference>
<dbReference type="InterPro" id="IPR001520">
    <property type="entry name" value="5HT4_rcpt"/>
</dbReference>
<dbReference type="InterPro" id="IPR000276">
    <property type="entry name" value="GPCR_Rhodpsn"/>
</dbReference>
<dbReference type="InterPro" id="IPR017452">
    <property type="entry name" value="GPCR_Rhodpsn_7TM"/>
</dbReference>
<dbReference type="PANTHER" id="PTHR24248">
    <property type="entry name" value="ADRENERGIC RECEPTOR-RELATED G-PROTEIN COUPLED RECEPTOR"/>
    <property type="match status" value="1"/>
</dbReference>
<dbReference type="PANTHER" id="PTHR24248:SF66">
    <property type="entry name" value="OCTOPAMINE RECEPTOR BETA-3R"/>
    <property type="match status" value="1"/>
</dbReference>
<dbReference type="Pfam" id="PF00001">
    <property type="entry name" value="7tm_1"/>
    <property type="match status" value="1"/>
</dbReference>
<dbReference type="PRINTS" id="PR01059">
    <property type="entry name" value="5HT4RECEPTR"/>
</dbReference>
<dbReference type="SUPFAM" id="SSF81321">
    <property type="entry name" value="Family A G protein-coupled receptor-like"/>
    <property type="match status" value="1"/>
</dbReference>
<dbReference type="PROSITE" id="PS50262">
    <property type="entry name" value="G_PROTEIN_RECEP_F1_2"/>
    <property type="match status" value="1"/>
</dbReference>
<gene>
    <name type="primary">HTR4</name>
</gene>
<accession>Q29006</accession>
<protein>
    <recommendedName>
        <fullName>5-hydroxytryptamine receptor 4</fullName>
        <shortName>5-HT-4</shortName>
        <shortName>5-HT4</shortName>
    </recommendedName>
    <alternativeName>
        <fullName>Serotonin receptor 4</fullName>
    </alternativeName>
</protein>
<evidence type="ECO:0000250" key="1">
    <source>
        <dbReference type="UniProtKB" id="P97288"/>
    </source>
</evidence>
<evidence type="ECO:0000250" key="2">
    <source>
        <dbReference type="UniProtKB" id="Q13639"/>
    </source>
</evidence>
<evidence type="ECO:0000255" key="3"/>
<evidence type="ECO:0000255" key="4">
    <source>
        <dbReference type="PROSITE-ProRule" id="PRU00521"/>
    </source>
</evidence>
<evidence type="ECO:0000256" key="5">
    <source>
        <dbReference type="SAM" id="MobiDB-lite"/>
    </source>
</evidence>
<sequence length="137" mass="15622">CCQPLVYRNKMTPLRVAVLLAGCWAIPVLISFLPIMQGWNNIGITDLIEKRKFHQNSNSTYCIFMVNKPYAITCSVVAFYIPFLLMVLAYWRIYVTAKEHAHQIQMLQRAGAPAEGRPPSADQHSTHRMRTETKAAK</sequence>
<comment type="function">
    <text evidence="2">G-protein coupled receptor for 5-hydroxytryptamine (serotonin), a biogenic hormone that functions as a neurotransmitter, a hormone and a mitogen. Ligand binding causes a conformation change that triggers signaling via guanine nucleotide-binding proteins (G proteins) and modulates the activity of downstream effectors. HTR4 is coupled to G(s) G alpha proteins and mediates activation of adenylate cyclase activity.</text>
</comment>
<comment type="subunit">
    <text evidence="2">Interacts (via C-terminus 330-346 AA) with GRK5; this interaction is promoted by 5-HT (serotonin).</text>
</comment>
<comment type="subcellular location">
    <subcellularLocation>
        <location evidence="2">Cell membrane</location>
        <topology evidence="3">Multi-pass membrane protein</topology>
    </subcellularLocation>
    <subcellularLocation>
        <location evidence="1">Endosome membrane</location>
        <topology evidence="3">Multi-pass membrane protein</topology>
    </subcellularLocation>
    <text evidence="1">Interaction with SNX27 mediates recruitment to early endosomes, while interaction with NHERF1 and EZR might target the protein to specialized subcellular regions, such as microvilli.</text>
</comment>
<comment type="domain">
    <text evidence="2">Specificity for G(s) G alpha proteins is determined by the length of transmembrane regions 5 and 6 (TM5 and TM6).</text>
</comment>
<comment type="similarity">
    <text evidence="4">Belongs to the G-protein coupled receptor 1 family.</text>
</comment>
<feature type="chain" id="PRO_0000068967" description="5-hydroxytryptamine receptor 4">
    <location>
        <begin position="1" status="less than"/>
        <end position="137" status="greater than"/>
    </location>
</feature>
<feature type="transmembrane region" description="Helical; Name=4" evidence="2">
    <location>
        <begin position="12"/>
        <end position="35"/>
    </location>
</feature>
<feature type="transmembrane region" description="Helical; Name=5" evidence="2">
    <location>
        <begin position="67"/>
        <end position="90"/>
    </location>
</feature>
<feature type="region of interest" description="Disordered" evidence="5">
    <location>
        <begin position="112"/>
        <end position="137"/>
    </location>
</feature>
<feature type="glycosylation site" description="N-linked (GlcNAc...) asparagine" evidence="3">
    <location>
        <position position="58"/>
    </location>
</feature>
<feature type="non-terminal residue">
    <location>
        <position position="1"/>
    </location>
</feature>
<feature type="non-terminal residue">
    <location>
        <position position="137"/>
    </location>
</feature>